<proteinExistence type="inferred from homology"/>
<feature type="chain" id="PRO_1000055489" description="Large ribosomal subunit protein uL13">
    <location>
        <begin position="1"/>
        <end position="142"/>
    </location>
</feature>
<protein>
    <recommendedName>
        <fullName evidence="1">Large ribosomal subunit protein uL13</fullName>
    </recommendedName>
    <alternativeName>
        <fullName evidence="2">50S ribosomal protein L13</fullName>
    </alternativeName>
</protein>
<evidence type="ECO:0000255" key="1">
    <source>
        <dbReference type="HAMAP-Rule" id="MF_01366"/>
    </source>
</evidence>
<evidence type="ECO:0000305" key="2"/>
<sequence length="142" mass="15982">MKTFSAKARDVKRDWLLIDADGKTLGRLATKIASCLRGKHKPEYTPHTDIGDYIVVINASKIKVTGNKFEDKIYYHHTGYVGNLKSIAFKDLQTKNPETIINKAVKGMLPKGPLGRDMFKKMKVFVDSEHTHGAQQPKVLDI</sequence>
<reference key="1">
    <citation type="journal article" date="2007" name="Curr. Biol.">
        <title>Reduced genome of the thioautotrophic intracellular symbiont in a deep-sea clam, Calyptogena okutanii.</title>
        <authorList>
            <person name="Kuwahara H."/>
            <person name="Yoshida T."/>
            <person name="Takaki Y."/>
            <person name="Shimamura S."/>
            <person name="Nishi S."/>
            <person name="Harada M."/>
            <person name="Matsuyama K."/>
            <person name="Takishita K."/>
            <person name="Kawato M."/>
            <person name="Uematsu K."/>
            <person name="Fujiwara Y."/>
            <person name="Sato T."/>
            <person name="Kato C."/>
            <person name="Kitagawa M."/>
            <person name="Kato I."/>
            <person name="Maruyama T."/>
        </authorList>
    </citation>
    <scope>NUCLEOTIDE SEQUENCE [LARGE SCALE GENOMIC DNA]</scope>
    <source>
        <strain>HA</strain>
    </source>
</reference>
<dbReference type="EMBL" id="AP009247">
    <property type="protein sequence ID" value="BAF61948.1"/>
    <property type="molecule type" value="Genomic_DNA"/>
</dbReference>
<dbReference type="RefSeq" id="WP_011930217.1">
    <property type="nucleotide sequence ID" value="NC_009465.1"/>
</dbReference>
<dbReference type="SMR" id="A5CVT9"/>
<dbReference type="STRING" id="412965.COSY_0843"/>
<dbReference type="KEGG" id="vok:COSY_0843"/>
<dbReference type="eggNOG" id="COG0102">
    <property type="taxonomic scope" value="Bacteria"/>
</dbReference>
<dbReference type="HOGENOM" id="CLU_082184_2_2_6"/>
<dbReference type="OrthoDB" id="9801330at2"/>
<dbReference type="Proteomes" id="UP000000247">
    <property type="component" value="Chromosome"/>
</dbReference>
<dbReference type="GO" id="GO:0022625">
    <property type="term" value="C:cytosolic large ribosomal subunit"/>
    <property type="evidence" value="ECO:0007669"/>
    <property type="project" value="TreeGrafter"/>
</dbReference>
<dbReference type="GO" id="GO:0003729">
    <property type="term" value="F:mRNA binding"/>
    <property type="evidence" value="ECO:0007669"/>
    <property type="project" value="TreeGrafter"/>
</dbReference>
<dbReference type="GO" id="GO:0003735">
    <property type="term" value="F:structural constituent of ribosome"/>
    <property type="evidence" value="ECO:0007669"/>
    <property type="project" value="InterPro"/>
</dbReference>
<dbReference type="GO" id="GO:0017148">
    <property type="term" value="P:negative regulation of translation"/>
    <property type="evidence" value="ECO:0007669"/>
    <property type="project" value="TreeGrafter"/>
</dbReference>
<dbReference type="GO" id="GO:0006412">
    <property type="term" value="P:translation"/>
    <property type="evidence" value="ECO:0007669"/>
    <property type="project" value="UniProtKB-UniRule"/>
</dbReference>
<dbReference type="CDD" id="cd00392">
    <property type="entry name" value="Ribosomal_L13"/>
    <property type="match status" value="1"/>
</dbReference>
<dbReference type="FunFam" id="3.90.1180.10:FF:000001">
    <property type="entry name" value="50S ribosomal protein L13"/>
    <property type="match status" value="1"/>
</dbReference>
<dbReference type="Gene3D" id="3.90.1180.10">
    <property type="entry name" value="Ribosomal protein L13"/>
    <property type="match status" value="1"/>
</dbReference>
<dbReference type="HAMAP" id="MF_01366">
    <property type="entry name" value="Ribosomal_uL13"/>
    <property type="match status" value="1"/>
</dbReference>
<dbReference type="InterPro" id="IPR005822">
    <property type="entry name" value="Ribosomal_uL13"/>
</dbReference>
<dbReference type="InterPro" id="IPR005823">
    <property type="entry name" value="Ribosomal_uL13_bac-type"/>
</dbReference>
<dbReference type="InterPro" id="IPR023563">
    <property type="entry name" value="Ribosomal_uL13_CS"/>
</dbReference>
<dbReference type="InterPro" id="IPR036899">
    <property type="entry name" value="Ribosomal_uL13_sf"/>
</dbReference>
<dbReference type="NCBIfam" id="TIGR01066">
    <property type="entry name" value="rplM_bact"/>
    <property type="match status" value="1"/>
</dbReference>
<dbReference type="PANTHER" id="PTHR11545:SF2">
    <property type="entry name" value="LARGE RIBOSOMAL SUBUNIT PROTEIN UL13M"/>
    <property type="match status" value="1"/>
</dbReference>
<dbReference type="PANTHER" id="PTHR11545">
    <property type="entry name" value="RIBOSOMAL PROTEIN L13"/>
    <property type="match status" value="1"/>
</dbReference>
<dbReference type="Pfam" id="PF00572">
    <property type="entry name" value="Ribosomal_L13"/>
    <property type="match status" value="1"/>
</dbReference>
<dbReference type="PIRSF" id="PIRSF002181">
    <property type="entry name" value="Ribosomal_L13"/>
    <property type="match status" value="1"/>
</dbReference>
<dbReference type="SUPFAM" id="SSF52161">
    <property type="entry name" value="Ribosomal protein L13"/>
    <property type="match status" value="1"/>
</dbReference>
<dbReference type="PROSITE" id="PS00783">
    <property type="entry name" value="RIBOSOMAL_L13"/>
    <property type="match status" value="1"/>
</dbReference>
<gene>
    <name evidence="1" type="primary">rplM</name>
    <name type="ordered locus">COSY_0843</name>
</gene>
<accession>A5CVT9</accession>
<comment type="function">
    <text evidence="1">This protein is one of the early assembly proteins of the 50S ribosomal subunit, although it is not seen to bind rRNA by itself. It is important during the early stages of 50S assembly.</text>
</comment>
<comment type="subunit">
    <text evidence="1">Part of the 50S ribosomal subunit.</text>
</comment>
<comment type="similarity">
    <text evidence="1">Belongs to the universal ribosomal protein uL13 family.</text>
</comment>
<keyword id="KW-1185">Reference proteome</keyword>
<keyword id="KW-0687">Ribonucleoprotein</keyword>
<keyword id="KW-0689">Ribosomal protein</keyword>
<name>RL13_VESOH</name>
<organism>
    <name type="scientific">Vesicomyosocius okutanii subsp. Calyptogena okutanii (strain HA)</name>
    <dbReference type="NCBI Taxonomy" id="412965"/>
    <lineage>
        <taxon>Bacteria</taxon>
        <taxon>Pseudomonadati</taxon>
        <taxon>Pseudomonadota</taxon>
        <taxon>Gammaproteobacteria</taxon>
        <taxon>Candidatus Pseudothioglobaceae</taxon>
        <taxon>Candidatus Vesicomyosocius</taxon>
    </lineage>
</organism>